<dbReference type="EC" id="6.3.5.-" evidence="1"/>
<dbReference type="EMBL" id="CP000868">
    <property type="protein sequence ID" value="ABX16788.1"/>
    <property type="molecule type" value="Genomic_DNA"/>
</dbReference>
<dbReference type="EMBL" id="AP009385">
    <property type="protein sequence ID" value="BAG42105.1"/>
    <property type="molecule type" value="Genomic_DNA"/>
</dbReference>
<dbReference type="RefSeq" id="WP_006401865.1">
    <property type="nucleotide sequence ID" value="NC_010804.1"/>
</dbReference>
<dbReference type="SMR" id="A9AC50"/>
<dbReference type="STRING" id="395019.BMULJ_00127"/>
<dbReference type="KEGG" id="bmj:BMULJ_00127"/>
<dbReference type="KEGG" id="bmu:Bmul_3104"/>
<dbReference type="eggNOG" id="COG0064">
    <property type="taxonomic scope" value="Bacteria"/>
</dbReference>
<dbReference type="HOGENOM" id="CLU_019240_0_0_4"/>
<dbReference type="Proteomes" id="UP000008815">
    <property type="component" value="Chromosome 1"/>
</dbReference>
<dbReference type="GO" id="GO:0050566">
    <property type="term" value="F:asparaginyl-tRNA synthase (glutamine-hydrolyzing) activity"/>
    <property type="evidence" value="ECO:0007669"/>
    <property type="project" value="RHEA"/>
</dbReference>
<dbReference type="GO" id="GO:0005524">
    <property type="term" value="F:ATP binding"/>
    <property type="evidence" value="ECO:0007669"/>
    <property type="project" value="UniProtKB-KW"/>
</dbReference>
<dbReference type="GO" id="GO:0050567">
    <property type="term" value="F:glutaminyl-tRNA synthase (glutamine-hydrolyzing) activity"/>
    <property type="evidence" value="ECO:0007669"/>
    <property type="project" value="UniProtKB-UniRule"/>
</dbReference>
<dbReference type="GO" id="GO:0070681">
    <property type="term" value="P:glutaminyl-tRNAGln biosynthesis via transamidation"/>
    <property type="evidence" value="ECO:0007669"/>
    <property type="project" value="TreeGrafter"/>
</dbReference>
<dbReference type="GO" id="GO:0006412">
    <property type="term" value="P:translation"/>
    <property type="evidence" value="ECO:0007669"/>
    <property type="project" value="UniProtKB-UniRule"/>
</dbReference>
<dbReference type="FunFam" id="1.10.10.410:FF:000001">
    <property type="entry name" value="Aspartyl/glutamyl-tRNA(Asn/Gln) amidotransferase subunit B"/>
    <property type="match status" value="1"/>
</dbReference>
<dbReference type="FunFam" id="1.10.150.380:FF:000001">
    <property type="entry name" value="Aspartyl/glutamyl-tRNA(Asn/Gln) amidotransferase subunit B"/>
    <property type="match status" value="1"/>
</dbReference>
<dbReference type="Gene3D" id="1.10.10.410">
    <property type="match status" value="1"/>
</dbReference>
<dbReference type="Gene3D" id="1.10.150.380">
    <property type="entry name" value="GatB domain, N-terminal subdomain"/>
    <property type="match status" value="1"/>
</dbReference>
<dbReference type="HAMAP" id="MF_00121">
    <property type="entry name" value="GatB"/>
    <property type="match status" value="1"/>
</dbReference>
<dbReference type="InterPro" id="IPR017959">
    <property type="entry name" value="Asn/Gln-tRNA_amidoTrfase_suB/E"/>
</dbReference>
<dbReference type="InterPro" id="IPR006075">
    <property type="entry name" value="Asn/Gln-tRNA_Trfase_suB/E_cat"/>
</dbReference>
<dbReference type="InterPro" id="IPR018027">
    <property type="entry name" value="Asn/Gln_amidotransferase"/>
</dbReference>
<dbReference type="InterPro" id="IPR003789">
    <property type="entry name" value="Asn/Gln_tRNA_amidoTrase-B-like"/>
</dbReference>
<dbReference type="InterPro" id="IPR004413">
    <property type="entry name" value="GatB"/>
</dbReference>
<dbReference type="InterPro" id="IPR042114">
    <property type="entry name" value="GatB_C_1"/>
</dbReference>
<dbReference type="InterPro" id="IPR023168">
    <property type="entry name" value="GatB_Yqey_C_2"/>
</dbReference>
<dbReference type="InterPro" id="IPR017958">
    <property type="entry name" value="Gln-tRNA_amidoTrfase_suB_CS"/>
</dbReference>
<dbReference type="InterPro" id="IPR014746">
    <property type="entry name" value="Gln_synth/guanido_kin_cat_dom"/>
</dbReference>
<dbReference type="NCBIfam" id="TIGR00133">
    <property type="entry name" value="gatB"/>
    <property type="match status" value="1"/>
</dbReference>
<dbReference type="NCBIfam" id="NF004012">
    <property type="entry name" value="PRK05477.1-2"/>
    <property type="match status" value="1"/>
</dbReference>
<dbReference type="NCBIfam" id="NF004014">
    <property type="entry name" value="PRK05477.1-4"/>
    <property type="match status" value="1"/>
</dbReference>
<dbReference type="NCBIfam" id="NF004015">
    <property type="entry name" value="PRK05477.1-5"/>
    <property type="match status" value="1"/>
</dbReference>
<dbReference type="PANTHER" id="PTHR11659">
    <property type="entry name" value="GLUTAMYL-TRNA GLN AMIDOTRANSFERASE SUBUNIT B MITOCHONDRIAL AND PROKARYOTIC PET112-RELATED"/>
    <property type="match status" value="1"/>
</dbReference>
<dbReference type="PANTHER" id="PTHR11659:SF0">
    <property type="entry name" value="GLUTAMYL-TRNA(GLN) AMIDOTRANSFERASE SUBUNIT B, MITOCHONDRIAL"/>
    <property type="match status" value="1"/>
</dbReference>
<dbReference type="Pfam" id="PF02934">
    <property type="entry name" value="GatB_N"/>
    <property type="match status" value="1"/>
</dbReference>
<dbReference type="Pfam" id="PF02637">
    <property type="entry name" value="GatB_Yqey"/>
    <property type="match status" value="1"/>
</dbReference>
<dbReference type="SMART" id="SM00845">
    <property type="entry name" value="GatB_Yqey"/>
    <property type="match status" value="1"/>
</dbReference>
<dbReference type="SUPFAM" id="SSF89095">
    <property type="entry name" value="GatB/YqeY motif"/>
    <property type="match status" value="1"/>
</dbReference>
<dbReference type="SUPFAM" id="SSF55931">
    <property type="entry name" value="Glutamine synthetase/guanido kinase"/>
    <property type="match status" value="1"/>
</dbReference>
<dbReference type="PROSITE" id="PS01234">
    <property type="entry name" value="GATB"/>
    <property type="match status" value="1"/>
</dbReference>
<evidence type="ECO:0000255" key="1">
    <source>
        <dbReference type="HAMAP-Rule" id="MF_00121"/>
    </source>
</evidence>
<organism>
    <name type="scientific">Burkholderia multivorans (strain ATCC 17616 / 249)</name>
    <dbReference type="NCBI Taxonomy" id="395019"/>
    <lineage>
        <taxon>Bacteria</taxon>
        <taxon>Pseudomonadati</taxon>
        <taxon>Pseudomonadota</taxon>
        <taxon>Betaproteobacteria</taxon>
        <taxon>Burkholderiales</taxon>
        <taxon>Burkholderiaceae</taxon>
        <taxon>Burkholderia</taxon>
        <taxon>Burkholderia cepacia complex</taxon>
    </lineage>
</organism>
<protein>
    <recommendedName>
        <fullName evidence="1">Aspartyl/glutamyl-tRNA(Asn/Gln) amidotransferase subunit B</fullName>
        <shortName evidence="1">Asp/Glu-ADT subunit B</shortName>
        <ecNumber evidence="1">6.3.5.-</ecNumber>
    </recommendedName>
</protein>
<proteinExistence type="inferred from homology"/>
<accession>A9AC50</accession>
<comment type="function">
    <text evidence="1">Allows the formation of correctly charged Asn-tRNA(Asn) or Gln-tRNA(Gln) through the transamidation of misacylated Asp-tRNA(Asn) or Glu-tRNA(Gln) in organisms which lack either or both of asparaginyl-tRNA or glutaminyl-tRNA synthetases. The reaction takes place in the presence of glutamine and ATP through an activated phospho-Asp-tRNA(Asn) or phospho-Glu-tRNA(Gln).</text>
</comment>
<comment type="catalytic activity">
    <reaction evidence="1">
        <text>L-glutamyl-tRNA(Gln) + L-glutamine + ATP + H2O = L-glutaminyl-tRNA(Gln) + L-glutamate + ADP + phosphate + H(+)</text>
        <dbReference type="Rhea" id="RHEA:17521"/>
        <dbReference type="Rhea" id="RHEA-COMP:9681"/>
        <dbReference type="Rhea" id="RHEA-COMP:9684"/>
        <dbReference type="ChEBI" id="CHEBI:15377"/>
        <dbReference type="ChEBI" id="CHEBI:15378"/>
        <dbReference type="ChEBI" id="CHEBI:29985"/>
        <dbReference type="ChEBI" id="CHEBI:30616"/>
        <dbReference type="ChEBI" id="CHEBI:43474"/>
        <dbReference type="ChEBI" id="CHEBI:58359"/>
        <dbReference type="ChEBI" id="CHEBI:78520"/>
        <dbReference type="ChEBI" id="CHEBI:78521"/>
        <dbReference type="ChEBI" id="CHEBI:456216"/>
    </reaction>
</comment>
<comment type="catalytic activity">
    <reaction evidence="1">
        <text>L-aspartyl-tRNA(Asn) + L-glutamine + ATP + H2O = L-asparaginyl-tRNA(Asn) + L-glutamate + ADP + phosphate + 2 H(+)</text>
        <dbReference type="Rhea" id="RHEA:14513"/>
        <dbReference type="Rhea" id="RHEA-COMP:9674"/>
        <dbReference type="Rhea" id="RHEA-COMP:9677"/>
        <dbReference type="ChEBI" id="CHEBI:15377"/>
        <dbReference type="ChEBI" id="CHEBI:15378"/>
        <dbReference type="ChEBI" id="CHEBI:29985"/>
        <dbReference type="ChEBI" id="CHEBI:30616"/>
        <dbReference type="ChEBI" id="CHEBI:43474"/>
        <dbReference type="ChEBI" id="CHEBI:58359"/>
        <dbReference type="ChEBI" id="CHEBI:78515"/>
        <dbReference type="ChEBI" id="CHEBI:78516"/>
        <dbReference type="ChEBI" id="CHEBI:456216"/>
    </reaction>
</comment>
<comment type="subunit">
    <text evidence="1">Heterotrimer of A, B and C subunits.</text>
</comment>
<comment type="similarity">
    <text evidence="1">Belongs to the GatB/GatE family. GatB subfamily.</text>
</comment>
<keyword id="KW-0067">ATP-binding</keyword>
<keyword id="KW-0436">Ligase</keyword>
<keyword id="KW-0547">Nucleotide-binding</keyword>
<keyword id="KW-0648">Protein biosynthesis</keyword>
<keyword id="KW-1185">Reference proteome</keyword>
<sequence>MSTQWEVVIGLETHAQLSTVSKIFSGASTQFGAEPNTQACPVDLALPGVLPVLNRGAVERAIRFGLAIGATIAPRSIFARKNYFYPDLPKGYQISQYEIPVVQGGAITIQVPANEKAGKPAYEKTVNLTRAHLEEDAGKSLHEDFAGMTGIDLNRAGTPLLEIVTEPEMRSAAEAVAYAKALHALVVWLGICDGNMQEGSFRCDANVSVRPVGQEKFGTRAEIKNLNSFRFLEEAINYEVRRQIELIEDGGEVVQETRLYDPDKRETRSMRSKEDAHDYRYFPDPDLMPLVIGRDWVERVQAGMPELPAAMQQRFVEQYGVSAYDAGVLTSTKAMAAYFEAVVAKAGAANAKIAANWLMGDVSSQLNRDGIEIDAIPVSAAQLALLLQRIADGTISNKIAKEVFATMWEEKASDDGAADRIIEAKGLKQISDTGALEAIIDEVLAANAKSVEEFRAGKEKAFNALIGQAMKATKGKANPQQVNELLKKKLG</sequence>
<gene>
    <name evidence="1" type="primary">gatB</name>
    <name type="ordered locus">Bmul_3104</name>
    <name type="ordered locus">BMULJ_00127</name>
</gene>
<feature type="chain" id="PRO_1000117616" description="Aspartyl/glutamyl-tRNA(Asn/Gln) amidotransferase subunit B">
    <location>
        <begin position="1"/>
        <end position="491"/>
    </location>
</feature>
<name>GATB_BURM1</name>
<reference key="1">
    <citation type="submission" date="2007-10" db="EMBL/GenBank/DDBJ databases">
        <title>Complete sequence of chromosome 1 of Burkholderia multivorans ATCC 17616.</title>
        <authorList>
            <person name="Copeland A."/>
            <person name="Lucas S."/>
            <person name="Lapidus A."/>
            <person name="Barry K."/>
            <person name="Glavina del Rio T."/>
            <person name="Dalin E."/>
            <person name="Tice H."/>
            <person name="Pitluck S."/>
            <person name="Chain P."/>
            <person name="Malfatti S."/>
            <person name="Shin M."/>
            <person name="Vergez L."/>
            <person name="Schmutz J."/>
            <person name="Larimer F."/>
            <person name="Land M."/>
            <person name="Hauser L."/>
            <person name="Kyrpides N."/>
            <person name="Kim E."/>
            <person name="Tiedje J."/>
            <person name="Richardson P."/>
        </authorList>
    </citation>
    <scope>NUCLEOTIDE SEQUENCE [LARGE SCALE GENOMIC DNA]</scope>
    <source>
        <strain>ATCC 17616 / 249</strain>
    </source>
</reference>
<reference key="2">
    <citation type="submission" date="2007-04" db="EMBL/GenBank/DDBJ databases">
        <title>Complete genome sequence of Burkholderia multivorans ATCC 17616.</title>
        <authorList>
            <person name="Ohtsubo Y."/>
            <person name="Yamashita A."/>
            <person name="Kurokawa K."/>
            <person name="Takami H."/>
            <person name="Yuhara S."/>
            <person name="Nishiyama E."/>
            <person name="Endo R."/>
            <person name="Miyazaki R."/>
            <person name="Ono A."/>
            <person name="Yano K."/>
            <person name="Ito M."/>
            <person name="Sota M."/>
            <person name="Yuji N."/>
            <person name="Hattori M."/>
            <person name="Tsuda M."/>
        </authorList>
    </citation>
    <scope>NUCLEOTIDE SEQUENCE [LARGE SCALE GENOMIC DNA]</scope>
    <source>
        <strain>ATCC 17616 / 249</strain>
    </source>
</reference>